<organism>
    <name type="scientific">Bdellovibrio bacteriovorus (strain ATCC 15356 / DSM 50701 / NCIMB 9529 / HD100)</name>
    <dbReference type="NCBI Taxonomy" id="264462"/>
    <lineage>
        <taxon>Bacteria</taxon>
        <taxon>Pseudomonadati</taxon>
        <taxon>Bdellovibrionota</taxon>
        <taxon>Bdellovibrionia</taxon>
        <taxon>Bdellovibrionales</taxon>
        <taxon>Pseudobdellovibrionaceae</taxon>
        <taxon>Bdellovibrio</taxon>
    </lineage>
</organism>
<reference key="1">
    <citation type="journal article" date="2004" name="Science">
        <title>A predator unmasked: life cycle of Bdellovibrio bacteriovorus from a genomic perspective.</title>
        <authorList>
            <person name="Rendulic S."/>
            <person name="Jagtap P."/>
            <person name="Rosinus A."/>
            <person name="Eppinger M."/>
            <person name="Baar C."/>
            <person name="Lanz C."/>
            <person name="Keller H."/>
            <person name="Lambert C."/>
            <person name="Evans K.J."/>
            <person name="Goesmann A."/>
            <person name="Meyer F."/>
            <person name="Sockett R.E."/>
            <person name="Schuster S.C."/>
        </authorList>
    </citation>
    <scope>NUCLEOTIDE SEQUENCE [LARGE SCALE GENOMIC DNA]</scope>
    <source>
        <strain>ATCC 15356 / DSM 50701 / NCIMB 9529 / HD100</strain>
    </source>
</reference>
<proteinExistence type="inferred from homology"/>
<protein>
    <recommendedName>
        <fullName evidence="1">Lipoate-protein ligase A</fullName>
        <ecNumber evidence="1">6.3.1.20</ecNumber>
    </recommendedName>
    <alternativeName>
        <fullName evidence="1">Lipoate--protein ligase</fullName>
    </alternativeName>
</protein>
<sequence>MQKLKVFLSDSLNPHLNLATEEWIFHNLDPSQQVLFLWRNEETVVIGRNQNPWSECNLAKMKDEKVHLARRTTGGGAVFHDLQNTNFTFLSPKESYKRENNVQIIFDALKTFGIQGEASGRNDLLIPFPDGPRKFSGSAYREKKDRAFHHGTLLLNTDLTRLGNYLTPNPKKLQAKGKESVRARVANLTEVSPGINHDQIVTTMVKSFENFYAGKAEVESLTMESLKLIPELKEQYEQLSSWEWLYGNTLEFSHKMDEYLTLGFFDFHFKVEDGQIKDLKIYTDCLYPQVIEDLTESLRGKAYRGDAVREALMSVRGKHTELNLGLSEVEEWLCKNIEI</sequence>
<feature type="chain" id="PRO_0000209562" description="Lipoate-protein ligase A">
    <location>
        <begin position="1"/>
        <end position="339"/>
    </location>
</feature>
<feature type="domain" description="BPL/LPL catalytic" evidence="2">
    <location>
        <begin position="29"/>
        <end position="216"/>
    </location>
</feature>
<feature type="binding site" evidence="1">
    <location>
        <position position="71"/>
    </location>
    <ligand>
        <name>ATP</name>
        <dbReference type="ChEBI" id="CHEBI:30616"/>
    </ligand>
</feature>
<feature type="binding site" evidence="1">
    <location>
        <begin position="76"/>
        <end position="79"/>
    </location>
    <ligand>
        <name>ATP</name>
        <dbReference type="ChEBI" id="CHEBI:30616"/>
    </ligand>
</feature>
<feature type="binding site" evidence="1">
    <location>
        <position position="134"/>
    </location>
    <ligand>
        <name>(R)-lipoate</name>
        <dbReference type="ChEBI" id="CHEBI:83088"/>
    </ligand>
</feature>
<feature type="binding site" evidence="1">
    <location>
        <position position="134"/>
    </location>
    <ligand>
        <name>ATP</name>
        <dbReference type="ChEBI" id="CHEBI:30616"/>
    </ligand>
</feature>
<gene>
    <name evidence="1" type="primary">lplA</name>
    <name type="ordered locus">Bd2507</name>
</gene>
<keyword id="KW-0067">ATP-binding</keyword>
<keyword id="KW-0963">Cytoplasm</keyword>
<keyword id="KW-0436">Ligase</keyword>
<keyword id="KW-0547">Nucleotide-binding</keyword>
<keyword id="KW-1185">Reference proteome</keyword>
<name>LPLA_BDEBA</name>
<dbReference type="EC" id="6.3.1.20" evidence="1"/>
<dbReference type="EMBL" id="BX842652">
    <property type="protein sequence ID" value="CAE80307.1"/>
    <property type="molecule type" value="Genomic_DNA"/>
</dbReference>
<dbReference type="RefSeq" id="WP_011164910.1">
    <property type="nucleotide sequence ID" value="NC_005363.1"/>
</dbReference>
<dbReference type="SMR" id="P60809"/>
<dbReference type="STRING" id="264462.Bd2507"/>
<dbReference type="GeneID" id="93013411"/>
<dbReference type="KEGG" id="bba:Bd2507"/>
<dbReference type="eggNOG" id="COG0095">
    <property type="taxonomic scope" value="Bacteria"/>
</dbReference>
<dbReference type="HOGENOM" id="CLU_022986_0_1_7"/>
<dbReference type="UniPathway" id="UPA00537">
    <property type="reaction ID" value="UER00594"/>
</dbReference>
<dbReference type="UniPathway" id="UPA00537">
    <property type="reaction ID" value="UER00595"/>
</dbReference>
<dbReference type="Proteomes" id="UP000008080">
    <property type="component" value="Chromosome"/>
</dbReference>
<dbReference type="GO" id="GO:0005737">
    <property type="term" value="C:cytoplasm"/>
    <property type="evidence" value="ECO:0007669"/>
    <property type="project" value="UniProtKB-SubCell"/>
</dbReference>
<dbReference type="GO" id="GO:0005524">
    <property type="term" value="F:ATP binding"/>
    <property type="evidence" value="ECO:0007669"/>
    <property type="project" value="UniProtKB-KW"/>
</dbReference>
<dbReference type="GO" id="GO:0016979">
    <property type="term" value="F:lipoate-protein ligase activity"/>
    <property type="evidence" value="ECO:0007669"/>
    <property type="project" value="UniProtKB-EC"/>
</dbReference>
<dbReference type="GO" id="GO:0017118">
    <property type="term" value="F:lipoyltransferase activity"/>
    <property type="evidence" value="ECO:0007669"/>
    <property type="project" value="TreeGrafter"/>
</dbReference>
<dbReference type="GO" id="GO:0036211">
    <property type="term" value="P:protein modification process"/>
    <property type="evidence" value="ECO:0007669"/>
    <property type="project" value="InterPro"/>
</dbReference>
<dbReference type="CDD" id="cd16443">
    <property type="entry name" value="LplA"/>
    <property type="match status" value="1"/>
</dbReference>
<dbReference type="Gene3D" id="3.30.930.10">
    <property type="entry name" value="Bira Bifunctional Protein, Domain 2"/>
    <property type="match status" value="1"/>
</dbReference>
<dbReference type="Gene3D" id="3.30.390.50">
    <property type="entry name" value="CO dehydrogenase flavoprotein, C-terminal domain"/>
    <property type="match status" value="1"/>
</dbReference>
<dbReference type="HAMAP" id="MF_01602">
    <property type="entry name" value="LplA"/>
    <property type="match status" value="1"/>
</dbReference>
<dbReference type="InterPro" id="IPR045864">
    <property type="entry name" value="aa-tRNA-synth_II/BPL/LPL"/>
</dbReference>
<dbReference type="InterPro" id="IPR004143">
    <property type="entry name" value="BPL_LPL_catalytic"/>
</dbReference>
<dbReference type="InterPro" id="IPR023741">
    <property type="entry name" value="Lipoate_ligase_A"/>
</dbReference>
<dbReference type="InterPro" id="IPR019491">
    <property type="entry name" value="Lipoate_protein_ligase_C"/>
</dbReference>
<dbReference type="InterPro" id="IPR004562">
    <property type="entry name" value="LipoylTrfase_LipoateP_Ligase"/>
</dbReference>
<dbReference type="NCBIfam" id="TIGR00545">
    <property type="entry name" value="lipoyltrans"/>
    <property type="match status" value="1"/>
</dbReference>
<dbReference type="PANTHER" id="PTHR12561">
    <property type="entry name" value="LIPOATE-PROTEIN LIGASE"/>
    <property type="match status" value="1"/>
</dbReference>
<dbReference type="PANTHER" id="PTHR12561:SF3">
    <property type="entry name" value="LIPOYLTRANSFERASE 1, MITOCHONDRIAL"/>
    <property type="match status" value="1"/>
</dbReference>
<dbReference type="Pfam" id="PF10437">
    <property type="entry name" value="Lip_prot_lig_C"/>
    <property type="match status" value="1"/>
</dbReference>
<dbReference type="Pfam" id="PF21948">
    <property type="entry name" value="LplA-B_cat"/>
    <property type="match status" value="1"/>
</dbReference>
<dbReference type="SUPFAM" id="SSF55681">
    <property type="entry name" value="Class II aaRS and biotin synthetases"/>
    <property type="match status" value="1"/>
</dbReference>
<dbReference type="SUPFAM" id="SSF82649">
    <property type="entry name" value="SufE/NifU"/>
    <property type="match status" value="1"/>
</dbReference>
<dbReference type="PROSITE" id="PS51733">
    <property type="entry name" value="BPL_LPL_CATALYTIC"/>
    <property type="match status" value="1"/>
</dbReference>
<evidence type="ECO:0000255" key="1">
    <source>
        <dbReference type="HAMAP-Rule" id="MF_01602"/>
    </source>
</evidence>
<evidence type="ECO:0000255" key="2">
    <source>
        <dbReference type="PROSITE-ProRule" id="PRU01067"/>
    </source>
</evidence>
<accession>P60809</accession>
<comment type="function">
    <text evidence="1">Catalyzes both the ATP-dependent activation of exogenously supplied lipoate to lipoyl-AMP and the transfer of the activated lipoyl onto the lipoyl domains of lipoate-dependent enzymes.</text>
</comment>
<comment type="catalytic activity">
    <reaction evidence="1">
        <text>L-lysyl-[lipoyl-carrier protein] + (R)-lipoate + ATP = N(6)-[(R)-lipoyl]-L-lysyl-[lipoyl-carrier protein] + AMP + diphosphate + H(+)</text>
        <dbReference type="Rhea" id="RHEA:49288"/>
        <dbReference type="Rhea" id="RHEA-COMP:10500"/>
        <dbReference type="Rhea" id="RHEA-COMP:10502"/>
        <dbReference type="ChEBI" id="CHEBI:15378"/>
        <dbReference type="ChEBI" id="CHEBI:29969"/>
        <dbReference type="ChEBI" id="CHEBI:30616"/>
        <dbReference type="ChEBI" id="CHEBI:33019"/>
        <dbReference type="ChEBI" id="CHEBI:83088"/>
        <dbReference type="ChEBI" id="CHEBI:83099"/>
        <dbReference type="ChEBI" id="CHEBI:456215"/>
        <dbReference type="EC" id="6.3.1.20"/>
    </reaction>
</comment>
<comment type="pathway">
    <text evidence="1">Protein modification; protein lipoylation via exogenous pathway; protein N(6)-(lipoyl)lysine from lipoate: step 1/2.</text>
</comment>
<comment type="pathway">
    <text evidence="1">Protein modification; protein lipoylation via exogenous pathway; protein N(6)-(lipoyl)lysine from lipoate: step 2/2.</text>
</comment>
<comment type="subunit">
    <text evidence="1">Monomer.</text>
</comment>
<comment type="subcellular location">
    <subcellularLocation>
        <location evidence="1">Cytoplasm</location>
    </subcellularLocation>
</comment>
<comment type="miscellaneous">
    <text evidence="1">In the transfer reaction, the free carboxyl group of lipoic acid is attached via an amide linkage to the epsilon-amino group of a specific lysine residue of lipoyl domains of lipoate-dependent enzymes.</text>
</comment>
<comment type="similarity">
    <text evidence="1">Belongs to the LplA family.</text>
</comment>